<proteinExistence type="evidence at protein level"/>
<sequence length="127" mass="14390">MAQSVPPGDINTQPSQKIVFNAPYDDKHTYHIKITNAGGRRIGWAIKTTNMRRLSVDPPCGVLDPKEKVLMAVSCDTFNAATEDLNNDRITIEWTNTPDGAAKQFRREWFQGDGMVRRKNLPIEYNL</sequence>
<feature type="initiator methionine" description="Removed" evidence="2">
    <location>
        <position position="1"/>
    </location>
</feature>
<feature type="chain" id="PRO_0000213433" description="Major sperm protein isoform alpha">
    <location>
        <begin position="2"/>
        <end position="127"/>
    </location>
</feature>
<feature type="domain" description="MSP" evidence="1">
    <location>
        <begin position="9"/>
        <end position="126"/>
    </location>
</feature>
<feature type="modified residue" description="N-acetylalanine" evidence="2">
    <location>
        <position position="2"/>
    </location>
</feature>
<feature type="sequence conflict" description="In Ref. 3; AA sequence." evidence="3" ref="3">
    <original>G</original>
    <variation>D</variation>
    <location>
        <position position="114"/>
    </location>
</feature>
<feature type="strand" evidence="4">
    <location>
        <begin position="10"/>
        <end position="16"/>
    </location>
</feature>
<feature type="strand" evidence="4">
    <location>
        <begin position="18"/>
        <end position="22"/>
    </location>
</feature>
<feature type="strand" evidence="4">
    <location>
        <begin position="30"/>
        <end position="36"/>
    </location>
</feature>
<feature type="strand" evidence="4">
    <location>
        <begin position="38"/>
        <end position="40"/>
    </location>
</feature>
<feature type="strand" evidence="4">
    <location>
        <begin position="42"/>
        <end position="49"/>
    </location>
</feature>
<feature type="turn" evidence="4">
    <location>
        <begin position="51"/>
        <end position="53"/>
    </location>
</feature>
<feature type="strand" evidence="4">
    <location>
        <begin position="54"/>
        <end position="58"/>
    </location>
</feature>
<feature type="strand" evidence="4">
    <location>
        <begin position="60"/>
        <end position="63"/>
    </location>
</feature>
<feature type="strand" evidence="4">
    <location>
        <begin position="68"/>
        <end position="75"/>
    </location>
</feature>
<feature type="helix" evidence="4">
    <location>
        <begin position="80"/>
        <end position="82"/>
    </location>
</feature>
<feature type="strand" evidence="4">
    <location>
        <begin position="89"/>
        <end position="96"/>
    </location>
</feature>
<feature type="helix" evidence="4">
    <location>
        <begin position="108"/>
        <end position="111"/>
    </location>
</feature>
<feature type="strand" evidence="4">
    <location>
        <begin position="112"/>
        <end position="114"/>
    </location>
</feature>
<feature type="strand" evidence="4">
    <location>
        <begin position="117"/>
        <end position="126"/>
    </location>
</feature>
<dbReference type="EMBL" id="M15680">
    <property type="protein sequence ID" value="AAA29375.1"/>
    <property type="molecule type" value="Genomic_DNA"/>
</dbReference>
<dbReference type="EMBL" id="X94249">
    <property type="protein sequence ID" value="CAA63933.1"/>
    <property type="molecule type" value="mRNA"/>
</dbReference>
<dbReference type="PIR" id="A45944">
    <property type="entry name" value="A45944"/>
</dbReference>
<dbReference type="PDB" id="1MSP">
    <property type="method" value="X-ray"/>
    <property type="resolution" value="2.50 A"/>
    <property type="chains" value="A/B=2-127"/>
</dbReference>
<dbReference type="PDB" id="2BVU">
    <property type="method" value="X-ray"/>
    <property type="resolution" value="2.50 A"/>
    <property type="chains" value="A/B/C/D=2-127"/>
</dbReference>
<dbReference type="PDB" id="3MSP">
    <property type="method" value="NMR"/>
    <property type="chains" value="A/B=2-127"/>
</dbReference>
<dbReference type="PDBsum" id="1MSP"/>
<dbReference type="PDBsum" id="2BVU"/>
<dbReference type="PDBsum" id="3MSP"/>
<dbReference type="BMRB" id="P27439"/>
<dbReference type="SMR" id="P27439"/>
<dbReference type="iPTMnet" id="P27439"/>
<dbReference type="EnsemblMetazoa" id="AgB02_g504_t01">
    <property type="protein sequence ID" value="AgB02_g504_t01"/>
    <property type="gene ID" value="AgB02_g504"/>
</dbReference>
<dbReference type="EvolutionaryTrace" id="P27439"/>
<dbReference type="GO" id="GO:0005737">
    <property type="term" value="C:cytoplasm"/>
    <property type="evidence" value="ECO:0007669"/>
    <property type="project" value="UniProtKB-KW"/>
</dbReference>
<dbReference type="GO" id="GO:0005856">
    <property type="term" value="C:cytoskeleton"/>
    <property type="evidence" value="ECO:0007669"/>
    <property type="project" value="UniProtKB-SubCell"/>
</dbReference>
<dbReference type="GO" id="GO:0031143">
    <property type="term" value="C:pseudopodium"/>
    <property type="evidence" value="ECO:0007669"/>
    <property type="project" value="UniProtKB-SubCell"/>
</dbReference>
<dbReference type="FunFam" id="2.60.40.10:FF:001120">
    <property type="entry name" value="Major sperm protein 19/31/40/45/50/51/53/59/61/65/81/113/142"/>
    <property type="match status" value="1"/>
</dbReference>
<dbReference type="Gene3D" id="2.60.40.10">
    <property type="entry name" value="Immunoglobulins"/>
    <property type="match status" value="1"/>
</dbReference>
<dbReference type="InterPro" id="IPR013783">
    <property type="entry name" value="Ig-like_fold"/>
</dbReference>
<dbReference type="InterPro" id="IPR000535">
    <property type="entry name" value="MSP_dom"/>
</dbReference>
<dbReference type="InterPro" id="IPR051155">
    <property type="entry name" value="Nematode_MSP"/>
</dbReference>
<dbReference type="InterPro" id="IPR008962">
    <property type="entry name" value="PapD-like_sf"/>
</dbReference>
<dbReference type="PANTHER" id="PTHR22920">
    <property type="entry name" value="MAJOR SPERM PROTEIN"/>
    <property type="match status" value="1"/>
</dbReference>
<dbReference type="PANTHER" id="PTHR22920:SF7">
    <property type="entry name" value="MSP DOMAIN-CONTAINING PROTEIN-RELATED"/>
    <property type="match status" value="1"/>
</dbReference>
<dbReference type="Pfam" id="PF00635">
    <property type="entry name" value="Motile_Sperm"/>
    <property type="match status" value="1"/>
</dbReference>
<dbReference type="SUPFAM" id="SSF49354">
    <property type="entry name" value="PapD-like"/>
    <property type="match status" value="1"/>
</dbReference>
<dbReference type="PROSITE" id="PS50202">
    <property type="entry name" value="MSP"/>
    <property type="match status" value="1"/>
</dbReference>
<reference key="1">
    <citation type="journal article" date="1986" name="Dev. Biol.">
        <title>Neither a germ line-specific nor several somatically expressed genes are lost or rearranged during embryonic chromatin diminution in the nematode Ascaris lumbricoides var. suum.</title>
        <authorList>
            <person name="Bennett K.L."/>
            <person name="Ward S."/>
        </authorList>
    </citation>
    <scope>NUCLEOTIDE SEQUENCE [GENOMIC DNA]</scope>
</reference>
<reference key="2">
    <citation type="submission" date="1995-12" db="EMBL/GenBank/DDBJ databases">
        <authorList>
            <person name="Bullock T.L."/>
            <person name="Parathasathy G."/>
            <person name="King K.L."/>
            <person name="Kent M.L."/>
            <person name="Roberts T.M."/>
            <person name="Stewart M."/>
        </authorList>
    </citation>
    <scope>NUCLEOTIDE SEQUENCE [MRNA]</scope>
</reference>
<reference key="3">
    <citation type="journal article" date="1992" name="J. Cell Sci.">
        <title>Structure and macromolecular assembly of two isoforms of the major sperm protein (MSP) from the amoeboid sperm of the nematode, Ascaris suum.</title>
        <authorList>
            <person name="King K.L."/>
            <person name="Stewart M."/>
            <person name="Roberts T.M."/>
            <person name="Seavy M."/>
        </authorList>
    </citation>
    <scope>PROTEIN SEQUENCE OF 2-127</scope>
    <scope>ACETYLATION AT ALA-2</scope>
    <source>
        <tissue>Sperm</tissue>
    </source>
</reference>
<reference key="4">
    <citation type="journal article" date="1996" name="J. Mol. Biol.">
        <title>2.5-A resolution crystal structure of the motile major sperm protein (MSP) of Ascaris suum.</title>
        <authorList>
            <person name="Bullock T.L."/>
            <person name="Roberts T.M."/>
            <person name="Stewart M."/>
        </authorList>
    </citation>
    <scope>X-RAY CRYSTALLOGRAPHY (2.5 ANGSTROMS)</scope>
</reference>
<reference key="5">
    <citation type="journal article" date="1998" name="J. Mol. Biol.">
        <title>Solution structure of the motile major sperm protein (MSP) of Ascaris suum -- evidence for two manganese binding sites and the possible role of divalent cations in filament formation.</title>
        <authorList>
            <person name="Haaf A."/>
            <person name="Leclaire L. III"/>
            <person name="Roberts G."/>
            <person name="Kent H.M."/>
            <person name="Roberts T.M."/>
            <person name="Stewart M."/>
            <person name="Neuhaus D."/>
        </authorList>
    </citation>
    <scope>STRUCTURE BY NMR</scope>
</reference>
<keyword id="KW-0002">3D-structure</keyword>
<keyword id="KW-0007">Acetylation</keyword>
<keyword id="KW-0966">Cell projection</keyword>
<keyword id="KW-0963">Cytoplasm</keyword>
<keyword id="KW-0206">Cytoskeleton</keyword>
<keyword id="KW-0903">Direct protein sequencing</keyword>
<name>MSP1_ASCSU</name>
<accession>P27439</accession>
<accession>P27441</accession>
<comment type="function">
    <text>Central component in molecular interactions underlying sperm crawling. Forms an extensive filament system that extends from sperm villipoda, along the leading edge of the pseudopod.</text>
</comment>
<comment type="subunit">
    <text>Forms filaments 10 nm wide, with a characteristic substructure repeating axially at 9 nm.</text>
</comment>
<comment type="subcellular location">
    <subcellularLocation>
        <location>Cell projection</location>
        <location>Pseudopodium</location>
    </subcellularLocation>
    <subcellularLocation>
        <location>Cytoplasm</location>
        <location>Cytoskeleton</location>
    </subcellularLocation>
</comment>
<comment type="tissue specificity">
    <text>Sperm.</text>
</comment>
<organism>
    <name type="scientific">Ascaris suum</name>
    <name type="common">Pig roundworm</name>
    <name type="synonym">Ascaris lumbricoides</name>
    <dbReference type="NCBI Taxonomy" id="6253"/>
    <lineage>
        <taxon>Eukaryota</taxon>
        <taxon>Metazoa</taxon>
        <taxon>Ecdysozoa</taxon>
        <taxon>Nematoda</taxon>
        <taxon>Chromadorea</taxon>
        <taxon>Rhabditida</taxon>
        <taxon>Spirurina</taxon>
        <taxon>Ascaridomorpha</taxon>
        <taxon>Ascaridoidea</taxon>
        <taxon>Ascarididae</taxon>
        <taxon>Ascaris</taxon>
    </lineage>
</organism>
<protein>
    <recommendedName>
        <fullName>Major sperm protein isoform alpha</fullName>
    </recommendedName>
    <alternativeName>
        <fullName>Alpha-MSP</fullName>
    </alternativeName>
</protein>
<evidence type="ECO:0000255" key="1">
    <source>
        <dbReference type="PROSITE-ProRule" id="PRU00132"/>
    </source>
</evidence>
<evidence type="ECO:0000269" key="2">
    <source>
    </source>
</evidence>
<evidence type="ECO:0000305" key="3"/>
<evidence type="ECO:0007829" key="4">
    <source>
        <dbReference type="PDB" id="1MSP"/>
    </source>
</evidence>